<keyword id="KW-0066">ATP synthesis</keyword>
<keyword id="KW-1003">Cell membrane</keyword>
<keyword id="KW-0375">Hydrogen ion transport</keyword>
<keyword id="KW-0406">Ion transport</keyword>
<keyword id="KW-0472">Membrane</keyword>
<keyword id="KW-0813">Transport</keyword>
<gene>
    <name evidence="1" type="primary">atpF</name>
    <name type="ordered locus">OE_3986R</name>
</gene>
<reference key="1">
    <citation type="journal article" date="2008" name="Genomics">
        <title>Evolution in the laboratory: the genome of Halobacterium salinarum strain R1 compared to that of strain NRC-1.</title>
        <authorList>
            <person name="Pfeiffer F."/>
            <person name="Schuster S.C."/>
            <person name="Broicher A."/>
            <person name="Falb M."/>
            <person name="Palm P."/>
            <person name="Rodewald K."/>
            <person name="Ruepp A."/>
            <person name="Soppa J."/>
            <person name="Tittor J."/>
            <person name="Oesterhelt D."/>
        </authorList>
    </citation>
    <scope>NUCLEOTIDE SEQUENCE [LARGE SCALE GENOMIC DNA]</scope>
    <source>
        <strain>ATCC 29341 / DSM 671 / R1</strain>
    </source>
</reference>
<proteinExistence type="inferred from homology"/>
<accession>B0R756</accession>
<comment type="function">
    <text evidence="1">Component of the A-type ATP synthase that produces ATP from ADP in the presence of a proton gradient across the membrane.</text>
</comment>
<comment type="subunit">
    <text evidence="1">Has multiple subunits with at least A(3), B(3), C, D, E, F, H, I and proteolipid K(x).</text>
</comment>
<comment type="subcellular location">
    <subcellularLocation>
        <location evidence="1">Cell membrane</location>
        <topology evidence="1">Peripheral membrane protein</topology>
    </subcellularLocation>
</comment>
<comment type="similarity">
    <text evidence="1">Belongs to the V-ATPase F subunit family.</text>
</comment>
<feature type="chain" id="PRO_1000115687" description="A-type ATP synthase subunit F">
    <location>
        <begin position="1"/>
        <end position="120"/>
    </location>
</feature>
<evidence type="ECO:0000255" key="1">
    <source>
        <dbReference type="HAMAP-Rule" id="MF_00312"/>
    </source>
</evidence>
<name>AATF_HALS3</name>
<organism>
    <name type="scientific">Halobacterium salinarum (strain ATCC 29341 / DSM 671 / R1)</name>
    <dbReference type="NCBI Taxonomy" id="478009"/>
    <lineage>
        <taxon>Archaea</taxon>
        <taxon>Methanobacteriati</taxon>
        <taxon>Methanobacteriota</taxon>
        <taxon>Stenosarchaea group</taxon>
        <taxon>Halobacteria</taxon>
        <taxon>Halobacteriales</taxon>
        <taxon>Halobacteriaceae</taxon>
        <taxon>Halobacterium</taxon>
        <taxon>Halobacterium salinarum NRC-34001</taxon>
    </lineage>
</organism>
<dbReference type="EMBL" id="AM774415">
    <property type="protein sequence ID" value="CAP14575.1"/>
    <property type="molecule type" value="Genomic_DNA"/>
</dbReference>
<dbReference type="RefSeq" id="WP_010903580.1">
    <property type="nucleotide sequence ID" value="NC_010364.1"/>
</dbReference>
<dbReference type="SMR" id="B0R756"/>
<dbReference type="EnsemblBacteria" id="CAP14575">
    <property type="protein sequence ID" value="CAP14575"/>
    <property type="gene ID" value="OE_3986R"/>
</dbReference>
<dbReference type="KEGG" id="hsl:OE_3986R"/>
<dbReference type="HOGENOM" id="CLU_135754_2_2_2"/>
<dbReference type="Proteomes" id="UP000001321">
    <property type="component" value="Chromosome"/>
</dbReference>
<dbReference type="GO" id="GO:0005886">
    <property type="term" value="C:plasma membrane"/>
    <property type="evidence" value="ECO:0007669"/>
    <property type="project" value="UniProtKB-SubCell"/>
</dbReference>
<dbReference type="GO" id="GO:0005524">
    <property type="term" value="F:ATP binding"/>
    <property type="evidence" value="ECO:0007669"/>
    <property type="project" value="UniProtKB-UniRule"/>
</dbReference>
<dbReference type="GO" id="GO:0046933">
    <property type="term" value="F:proton-transporting ATP synthase activity, rotational mechanism"/>
    <property type="evidence" value="ECO:0007669"/>
    <property type="project" value="UniProtKB-UniRule"/>
</dbReference>
<dbReference type="GO" id="GO:0046961">
    <property type="term" value="F:proton-transporting ATPase activity, rotational mechanism"/>
    <property type="evidence" value="ECO:0007669"/>
    <property type="project" value="InterPro"/>
</dbReference>
<dbReference type="GO" id="GO:0042777">
    <property type="term" value="P:proton motive force-driven plasma membrane ATP synthesis"/>
    <property type="evidence" value="ECO:0007669"/>
    <property type="project" value="UniProtKB-UniRule"/>
</dbReference>
<dbReference type="Gene3D" id="3.40.50.10580">
    <property type="entry name" value="ATPase, V1 complex, subunit F"/>
    <property type="match status" value="1"/>
</dbReference>
<dbReference type="HAMAP" id="MF_00312">
    <property type="entry name" value="ATP_synth_F_arch"/>
    <property type="match status" value="1"/>
</dbReference>
<dbReference type="InterPro" id="IPR008218">
    <property type="entry name" value="ATPase_V1-cplx_f_g_su"/>
</dbReference>
<dbReference type="InterPro" id="IPR022944">
    <property type="entry name" value="ATPase_V1-cplx_fsu_bac/arc"/>
</dbReference>
<dbReference type="InterPro" id="IPR036906">
    <property type="entry name" value="ATPase_V1_fsu_sf"/>
</dbReference>
<dbReference type="NCBIfam" id="NF002577">
    <property type="entry name" value="PRK02228.1"/>
    <property type="match status" value="1"/>
</dbReference>
<dbReference type="Pfam" id="PF01990">
    <property type="entry name" value="ATP-synt_F"/>
    <property type="match status" value="1"/>
</dbReference>
<dbReference type="SUPFAM" id="SSF159468">
    <property type="entry name" value="AtpF-like"/>
    <property type="match status" value="1"/>
</dbReference>
<sequence>MSQEIAVIGSPAFTTGFQLAGVRKVENVADDEKDDDLDAAVEAVLADEDVGIAVMHDDDLAHLSRGVRQSVEASVEPTFVTIGGGASGASGLRDQIKRAIGIDLMDDDDDASAADTEAGD</sequence>
<protein>
    <recommendedName>
        <fullName evidence="1">A-type ATP synthase subunit F</fullName>
    </recommendedName>
</protein>